<organism>
    <name type="scientific">Salmonella typhi</name>
    <dbReference type="NCBI Taxonomy" id="90370"/>
    <lineage>
        <taxon>Bacteria</taxon>
        <taxon>Pseudomonadati</taxon>
        <taxon>Pseudomonadota</taxon>
        <taxon>Gammaproteobacteria</taxon>
        <taxon>Enterobacterales</taxon>
        <taxon>Enterobacteriaceae</taxon>
        <taxon>Salmonella</taxon>
    </lineage>
</organism>
<feature type="signal peptide" evidence="2">
    <location>
        <begin position="1"/>
        <end position="15"/>
    </location>
</feature>
<feature type="chain" id="PRO_0000021023" description="Curli production assembly/transport component CsgG">
    <location>
        <begin position="16"/>
        <end position="277"/>
    </location>
</feature>
<feature type="lipid moiety-binding region" description="N-palmitoyl cysteine" evidence="2">
    <location>
        <position position="16"/>
    </location>
</feature>
<feature type="lipid moiety-binding region" description="S-diacylglycerol cysteine" evidence="2">
    <location>
        <position position="16"/>
    </location>
</feature>
<evidence type="ECO:0000250" key="1"/>
<evidence type="ECO:0000255" key="2">
    <source>
        <dbReference type="PROSITE-ProRule" id="PRU00303"/>
    </source>
</evidence>
<evidence type="ECO:0000305" key="3"/>
<name>CSGG_SALTI</name>
<sequence>MPRLLILVAVLLLSGCLTAPPKQAAKPTLMPRAQSYKDLTHLPAPTGKIFVSVYNIQDETGQFKPYPASNFSTAVPQSATAMLVTALKDSRWFIPLERQGLQNLLNERKIIRAAQENGTVAMNNRIPLQSLTAANIMVEGSIIGYESNVKSGGVGARYFGIGADTQYQLDQIAVNLRVVNVSTGEILSSVNTSKTILSYEVQAGVFRFIDYQRLLEGEIGYTSNEPVMLCLMSAIETGVIFLINDGIDRGLWDLQNKADRQNDILVKYRELSVPPES</sequence>
<keyword id="KW-1003">Cell membrane</keyword>
<keyword id="KW-0449">Lipoprotein</keyword>
<keyword id="KW-0472">Membrane</keyword>
<keyword id="KW-0564">Palmitate</keyword>
<keyword id="KW-0732">Signal</keyword>
<dbReference type="EMBL" id="AL513382">
    <property type="protein sequence ID" value="CAD08263.1"/>
    <property type="molecule type" value="Genomic_DNA"/>
</dbReference>
<dbReference type="EMBL" id="AE014613">
    <property type="protein sequence ID" value="AAO69404.1"/>
    <property type="molecule type" value="Genomic_DNA"/>
</dbReference>
<dbReference type="RefSeq" id="NP_455633.1">
    <property type="nucleotide sequence ID" value="NC_003198.1"/>
</dbReference>
<dbReference type="RefSeq" id="WP_001137620.1">
    <property type="nucleotide sequence ID" value="NZ_WSUR01000018.1"/>
</dbReference>
<dbReference type="SMR" id="P0A205"/>
<dbReference type="STRING" id="220341.gene:17585143"/>
<dbReference type="KEGG" id="stt:t1781"/>
<dbReference type="KEGG" id="sty:STY1176"/>
<dbReference type="PATRIC" id="fig|220341.7.peg.1176"/>
<dbReference type="eggNOG" id="COG1462">
    <property type="taxonomic scope" value="Bacteria"/>
</dbReference>
<dbReference type="HOGENOM" id="CLU_056911_0_0_6"/>
<dbReference type="OMA" id="TQGAASM"/>
<dbReference type="OrthoDB" id="1110708at2"/>
<dbReference type="Proteomes" id="UP000000541">
    <property type="component" value="Chromosome"/>
</dbReference>
<dbReference type="Proteomes" id="UP000002670">
    <property type="component" value="Chromosome"/>
</dbReference>
<dbReference type="GO" id="GO:0030288">
    <property type="term" value="C:outer membrane-bounded periplasmic space"/>
    <property type="evidence" value="ECO:0007669"/>
    <property type="project" value="InterPro"/>
</dbReference>
<dbReference type="GO" id="GO:0005886">
    <property type="term" value="C:plasma membrane"/>
    <property type="evidence" value="ECO:0007669"/>
    <property type="project" value="UniProtKB-SubCell"/>
</dbReference>
<dbReference type="FunFam" id="3.40.50.10610:FF:000001">
    <property type="entry name" value="Curli production assembly/transport component CsgG"/>
    <property type="match status" value="1"/>
</dbReference>
<dbReference type="FunFam" id="3.40.50.10610:FF:000003">
    <property type="entry name" value="Curli production assembly/transport component CsgG"/>
    <property type="match status" value="1"/>
</dbReference>
<dbReference type="Gene3D" id="3.40.50.10610">
    <property type="entry name" value="ABC-type transport auxiliary lipoprotein component"/>
    <property type="match status" value="2"/>
</dbReference>
<dbReference type="InterPro" id="IPR005534">
    <property type="entry name" value="Curli_assmbl/transp-comp_CsgG"/>
</dbReference>
<dbReference type="NCBIfam" id="NF011731">
    <property type="entry name" value="PRK15184.1"/>
    <property type="match status" value="1"/>
</dbReference>
<dbReference type="PANTHER" id="PTHR41164">
    <property type="entry name" value="CURLI PRODUCTION ASSEMBLY/TRANSPORT COMPONENT CSGG"/>
    <property type="match status" value="1"/>
</dbReference>
<dbReference type="PANTHER" id="PTHR41164:SF1">
    <property type="entry name" value="CURLI PRODUCTION ASSEMBLY_TRANSPORT COMPONENT CSGG"/>
    <property type="match status" value="1"/>
</dbReference>
<dbReference type="Pfam" id="PF03783">
    <property type="entry name" value="CsgG"/>
    <property type="match status" value="1"/>
</dbReference>
<dbReference type="PROSITE" id="PS51257">
    <property type="entry name" value="PROKAR_LIPOPROTEIN"/>
    <property type="match status" value="1"/>
</dbReference>
<comment type="function">
    <text evidence="1">May be involved in the biogenesis of curli organelles.</text>
</comment>
<comment type="subcellular location">
    <subcellularLocation>
        <location evidence="2">Cell membrane</location>
        <topology evidence="2">Lipid-anchor</topology>
    </subcellularLocation>
</comment>
<comment type="similarity">
    <text evidence="3">Belongs to the CsgG family.</text>
</comment>
<accession>P0A205</accession>
<accession>O54291</accession>
<reference key="1">
    <citation type="journal article" date="2001" name="Nature">
        <title>Complete genome sequence of a multiple drug resistant Salmonella enterica serovar Typhi CT18.</title>
        <authorList>
            <person name="Parkhill J."/>
            <person name="Dougan G."/>
            <person name="James K.D."/>
            <person name="Thomson N.R."/>
            <person name="Pickard D."/>
            <person name="Wain J."/>
            <person name="Churcher C.M."/>
            <person name="Mungall K.L."/>
            <person name="Bentley S.D."/>
            <person name="Holden M.T.G."/>
            <person name="Sebaihia M."/>
            <person name="Baker S."/>
            <person name="Basham D."/>
            <person name="Brooks K."/>
            <person name="Chillingworth T."/>
            <person name="Connerton P."/>
            <person name="Cronin A."/>
            <person name="Davis P."/>
            <person name="Davies R.M."/>
            <person name="Dowd L."/>
            <person name="White N."/>
            <person name="Farrar J."/>
            <person name="Feltwell T."/>
            <person name="Hamlin N."/>
            <person name="Haque A."/>
            <person name="Hien T.T."/>
            <person name="Holroyd S."/>
            <person name="Jagels K."/>
            <person name="Krogh A."/>
            <person name="Larsen T.S."/>
            <person name="Leather S."/>
            <person name="Moule S."/>
            <person name="O'Gaora P."/>
            <person name="Parry C."/>
            <person name="Quail M.A."/>
            <person name="Rutherford K.M."/>
            <person name="Simmonds M."/>
            <person name="Skelton J."/>
            <person name="Stevens K."/>
            <person name="Whitehead S."/>
            <person name="Barrell B.G."/>
        </authorList>
    </citation>
    <scope>NUCLEOTIDE SEQUENCE [LARGE SCALE GENOMIC DNA]</scope>
    <source>
        <strain>CT18</strain>
    </source>
</reference>
<reference key="2">
    <citation type="journal article" date="2003" name="J. Bacteriol.">
        <title>Comparative genomics of Salmonella enterica serovar Typhi strains Ty2 and CT18.</title>
        <authorList>
            <person name="Deng W."/>
            <person name="Liou S.-R."/>
            <person name="Plunkett G. III"/>
            <person name="Mayhew G.F."/>
            <person name="Rose D.J."/>
            <person name="Burland V."/>
            <person name="Kodoyianni V."/>
            <person name="Schwartz D.C."/>
            <person name="Blattner F.R."/>
        </authorList>
    </citation>
    <scope>NUCLEOTIDE SEQUENCE [LARGE SCALE GENOMIC DNA]</scope>
    <source>
        <strain>ATCC 700931 / Ty2</strain>
    </source>
</reference>
<protein>
    <recommendedName>
        <fullName>Curli production assembly/transport component CsgG</fullName>
    </recommendedName>
</protein>
<gene>
    <name type="primary">csgG</name>
    <name type="ordered locus">STY1176</name>
    <name type="ordered locus">t1781</name>
</gene>
<proteinExistence type="inferred from homology"/>